<proteinExistence type="inferred from homology"/>
<keyword id="KW-0165">Cleavage on pair of basic residues</keyword>
<keyword id="KW-0325">Glycoprotein</keyword>
<keyword id="KW-0339">Growth factor</keyword>
<keyword id="KW-0964">Secreted</keyword>
<keyword id="KW-0732">Signal</keyword>
<organism>
    <name type="scientific">Cylindrophis ruffus</name>
    <name type="common">Red-tailed pipe snake</name>
    <dbReference type="NCBI Taxonomy" id="186578"/>
    <lineage>
        <taxon>Eukaryota</taxon>
        <taxon>Metazoa</taxon>
        <taxon>Chordata</taxon>
        <taxon>Craniata</taxon>
        <taxon>Vertebrata</taxon>
        <taxon>Euteleostomi</taxon>
        <taxon>Lepidosauria</taxon>
        <taxon>Squamata</taxon>
        <taxon>Bifurcata</taxon>
        <taxon>Unidentata</taxon>
        <taxon>Episquamata</taxon>
        <taxon>Toxicofera</taxon>
        <taxon>Serpentes</taxon>
        <taxon>Henophidia</taxon>
        <taxon>Cylindrophiidae</taxon>
        <taxon>Cylindrophis</taxon>
    </lineage>
</organism>
<dbReference type="EMBL" id="AY988054">
    <property type="protein sequence ID" value="AAY44261.1"/>
    <property type="molecule type" value="Genomic_DNA"/>
</dbReference>
<dbReference type="GlyCosmos" id="Q1X6Y4">
    <property type="glycosylation" value="1 site, No reported glycans"/>
</dbReference>
<dbReference type="GO" id="GO:0030424">
    <property type="term" value="C:axon"/>
    <property type="evidence" value="ECO:0007669"/>
    <property type="project" value="TreeGrafter"/>
</dbReference>
<dbReference type="GO" id="GO:0030425">
    <property type="term" value="C:dendrite"/>
    <property type="evidence" value="ECO:0007669"/>
    <property type="project" value="TreeGrafter"/>
</dbReference>
<dbReference type="GO" id="GO:0005615">
    <property type="term" value="C:extracellular space"/>
    <property type="evidence" value="ECO:0007669"/>
    <property type="project" value="TreeGrafter"/>
</dbReference>
<dbReference type="GO" id="GO:0008021">
    <property type="term" value="C:synaptic vesicle"/>
    <property type="evidence" value="ECO:0007669"/>
    <property type="project" value="TreeGrafter"/>
</dbReference>
<dbReference type="GO" id="GO:0008083">
    <property type="term" value="F:growth factor activity"/>
    <property type="evidence" value="ECO:0007669"/>
    <property type="project" value="UniProtKB-KW"/>
</dbReference>
<dbReference type="GO" id="GO:0005163">
    <property type="term" value="F:nerve growth factor receptor binding"/>
    <property type="evidence" value="ECO:0007669"/>
    <property type="project" value="TreeGrafter"/>
</dbReference>
<dbReference type="GO" id="GO:0007169">
    <property type="term" value="P:cell surface receptor protein tyrosine kinase signaling pathway"/>
    <property type="evidence" value="ECO:0007669"/>
    <property type="project" value="TreeGrafter"/>
</dbReference>
<dbReference type="GO" id="GO:0050804">
    <property type="term" value="P:modulation of chemical synaptic transmission"/>
    <property type="evidence" value="ECO:0007669"/>
    <property type="project" value="TreeGrafter"/>
</dbReference>
<dbReference type="GO" id="GO:0043524">
    <property type="term" value="P:negative regulation of neuron apoptotic process"/>
    <property type="evidence" value="ECO:0007669"/>
    <property type="project" value="TreeGrafter"/>
</dbReference>
<dbReference type="GO" id="GO:0021675">
    <property type="term" value="P:nerve development"/>
    <property type="evidence" value="ECO:0007669"/>
    <property type="project" value="TreeGrafter"/>
</dbReference>
<dbReference type="GO" id="GO:0038180">
    <property type="term" value="P:nerve growth factor signaling pathway"/>
    <property type="evidence" value="ECO:0007669"/>
    <property type="project" value="TreeGrafter"/>
</dbReference>
<dbReference type="GO" id="GO:0048812">
    <property type="term" value="P:neuron projection morphogenesis"/>
    <property type="evidence" value="ECO:0007669"/>
    <property type="project" value="TreeGrafter"/>
</dbReference>
<dbReference type="Gene3D" id="2.10.90.10">
    <property type="entry name" value="Cystine-knot cytokines"/>
    <property type="match status" value="1"/>
</dbReference>
<dbReference type="InterPro" id="IPR029034">
    <property type="entry name" value="Cystine-knot_cytokine"/>
</dbReference>
<dbReference type="InterPro" id="IPR020408">
    <property type="entry name" value="Nerve_growth_factor-like"/>
</dbReference>
<dbReference type="InterPro" id="IPR002072">
    <property type="entry name" value="Nerve_growth_factor-rel"/>
</dbReference>
<dbReference type="InterPro" id="IPR015578">
    <property type="entry name" value="Neurotrophin-3"/>
</dbReference>
<dbReference type="InterPro" id="IPR045815">
    <property type="entry name" value="NTF3_N"/>
</dbReference>
<dbReference type="PANTHER" id="PTHR11589">
    <property type="entry name" value="NERVE GROWTH FACTOR NGF -RELATED"/>
    <property type="match status" value="1"/>
</dbReference>
<dbReference type="PANTHER" id="PTHR11589:SF4">
    <property type="entry name" value="NEUROTROPHIN-3"/>
    <property type="match status" value="1"/>
</dbReference>
<dbReference type="Pfam" id="PF00243">
    <property type="entry name" value="NGF"/>
    <property type="match status" value="1"/>
</dbReference>
<dbReference type="Pfam" id="PF19338">
    <property type="entry name" value="NTF3_N"/>
    <property type="match status" value="1"/>
</dbReference>
<dbReference type="PIRSF" id="PIRSF001789">
    <property type="entry name" value="NGF"/>
    <property type="match status" value="1"/>
</dbReference>
<dbReference type="PRINTS" id="PR01914">
    <property type="entry name" value="NEUROTROPHN3"/>
</dbReference>
<dbReference type="SMART" id="SM00140">
    <property type="entry name" value="NGF"/>
    <property type="match status" value="1"/>
</dbReference>
<dbReference type="SUPFAM" id="SSF57501">
    <property type="entry name" value="Cystine-knot cytokines"/>
    <property type="match status" value="1"/>
</dbReference>
<dbReference type="PROSITE" id="PS50270">
    <property type="entry name" value="NGF_2"/>
    <property type="match status" value="1"/>
</dbReference>
<accession>Q1X6Y4</accession>
<sequence>IQSTSMDQGBLSEDSMNSFIRTLIQAGIWKNKVPKQTARTKDGTQTAVKKTKAEPDVVANKDRLGFQPIVSVDAELLRQQRRFSSPRVLLSENTPLEPPPLYLTEEPMGLNRTSRRKRFAEGKSHRGEYSVCDSESRWVTDKSSAVDIRGHQVTVLGEIRMGPS</sequence>
<reference key="1">
    <citation type="journal article" date="2006" name="Mol. Phylogenet. Evol.">
        <title>Dispersal and vicariance: the complex evolutionary history of boid snakes.</title>
        <authorList>
            <person name="Noonan B.P."/>
            <person name="Chippindale P.T."/>
        </authorList>
    </citation>
    <scope>NUCLEOTIDE SEQUENCE [GENOMIC DNA]</scope>
</reference>
<name>NTF3_CYLRU</name>
<gene>
    <name type="primary">NTF3</name>
</gene>
<evidence type="ECO:0000250" key="1"/>
<evidence type="ECO:0000255" key="2"/>
<evidence type="ECO:0000256" key="3">
    <source>
        <dbReference type="SAM" id="MobiDB-lite"/>
    </source>
</evidence>
<evidence type="ECO:0000305" key="4"/>
<protein>
    <recommendedName>
        <fullName>Neurotrophin-3</fullName>
        <shortName>NT-3</shortName>
    </recommendedName>
</protein>
<feature type="signal peptide" evidence="2">
    <location>
        <begin position="1" status="less than"/>
        <end position="3"/>
    </location>
</feature>
<feature type="propeptide" id="PRO_0000346723" evidence="1">
    <location>
        <begin position="4"/>
        <end position="118"/>
    </location>
</feature>
<feature type="chain" id="PRO_0000346724" description="Neurotrophin-3">
    <location>
        <begin position="119"/>
        <end position="164" status="greater than"/>
    </location>
</feature>
<feature type="region of interest" description="Disordered" evidence="3">
    <location>
        <begin position="89"/>
        <end position="126"/>
    </location>
</feature>
<feature type="glycosylation site" description="N-linked (GlcNAc...) asparagine" evidence="2">
    <location>
        <position position="111"/>
    </location>
</feature>
<feature type="non-terminal residue">
    <location>
        <position position="1"/>
    </location>
</feature>
<feature type="non-terminal residue">
    <location>
        <position position="164"/>
    </location>
</feature>
<comment type="function">
    <text evidence="1">Seems to promote the survival of visceral and proprioceptive sensory neurons.</text>
</comment>
<comment type="subcellular location">
    <subcellularLocation>
        <location evidence="1">Secreted</location>
    </subcellularLocation>
</comment>
<comment type="similarity">
    <text evidence="4">Belongs to the NGF-beta family.</text>
</comment>